<keyword id="KW-1185">Reference proteome</keyword>
<evidence type="ECO:0000256" key="1">
    <source>
        <dbReference type="SAM" id="MobiDB-lite"/>
    </source>
</evidence>
<evidence type="ECO:0000305" key="2"/>
<proteinExistence type="inferred from homology"/>
<comment type="similarity">
    <text evidence="2">Belongs to the MG185/MG260 family.</text>
</comment>
<feature type="chain" id="PRO_0000215278" description="Uncharacterized protein MPN_147">
    <location>
        <begin position="1"/>
        <end position="485"/>
    </location>
</feature>
<feature type="region of interest" description="Disordered" evidence="1">
    <location>
        <begin position="151"/>
        <end position="201"/>
    </location>
</feature>
<feature type="compositionally biased region" description="Low complexity" evidence="1">
    <location>
        <begin position="155"/>
        <end position="174"/>
    </location>
</feature>
<feature type="compositionally biased region" description="Basic and acidic residues" evidence="1">
    <location>
        <begin position="177"/>
        <end position="189"/>
    </location>
</feature>
<reference key="1">
    <citation type="journal article" date="1996" name="Nucleic Acids Res.">
        <title>Complete sequence analysis of the genome of the bacterium Mycoplasma pneumoniae.</title>
        <authorList>
            <person name="Himmelreich R."/>
            <person name="Hilbert H."/>
            <person name="Plagens H."/>
            <person name="Pirkl E."/>
            <person name="Li B.-C."/>
            <person name="Herrmann R."/>
        </authorList>
    </citation>
    <scope>NUCLEOTIDE SEQUENCE [LARGE SCALE GENOMIC DNA]</scope>
    <source>
        <strain>ATCC 29342 / M129 / Subtype 1</strain>
    </source>
</reference>
<name>Y147_MYCPN</name>
<gene>
    <name type="ordered locus">MPN_147</name>
    <name type="ORF">E07_orf485</name>
    <name type="ORF">MP007</name>
</gene>
<protein>
    <recommendedName>
        <fullName>Uncharacterized protein MPN_147</fullName>
    </recommendedName>
</protein>
<sequence>MVDFATRVAKSFKDKVSGIDNKKGTDIQGVLGLDSTPNVLFASVFAAGGGSYDNFFYKVENGRADFRNFANKGTSYKNLEKVYNDYKNLIGSNGLFASKDGSYSSNFEKFHQLAFYVGSSSGYNYAFADETAKRLKFGDSAIEYPNDTLEIKAPTNNSQSGDGNGGTNNDNLLGTFDIREKSNGKKGESNGKQGNGQDKKTISLYKDSIPKEKTEGTDAILISDNQLINQLQTAAKTSSSQNKANTAAITFKQSNKSETDQSTTSQVIGYTTTASLKADKKNIFDVKKLNNEKSERKIIVGATVETLNQANTLQANEAIIKPAPGKYQSTDSHKVMITQGPNIVGIHANEKEDKETQKFINWYLNKEESWSVQNSGSTTTKKQTAAQYFAEQSSYITPLKNNFKADQSATKDSTVNTNYFTKQTFDLFKEVNDGKVLGFNDPSDFRSGKFRNTIGSTFNATISSKVDFNKFFENFKASLGSGFER</sequence>
<dbReference type="EMBL" id="U00089">
    <property type="protein sequence ID" value="AAB95655.1"/>
    <property type="molecule type" value="Genomic_DNA"/>
</dbReference>
<dbReference type="PIR" id="S73333">
    <property type="entry name" value="S73333"/>
</dbReference>
<dbReference type="STRING" id="272634.MPN_147"/>
<dbReference type="EnsemblBacteria" id="AAB95655">
    <property type="protein sequence ID" value="AAB95655"/>
    <property type="gene ID" value="MPN_147"/>
</dbReference>
<dbReference type="KEGG" id="mpn:MPN_147"/>
<dbReference type="HOGENOM" id="CLU_017227_1_0_14"/>
<dbReference type="Proteomes" id="UP000000808">
    <property type="component" value="Chromosome"/>
</dbReference>
<dbReference type="InterPro" id="IPR004890">
    <property type="entry name" value="Lipoprotein_10_C"/>
</dbReference>
<dbReference type="InterPro" id="IPR004984">
    <property type="entry name" value="Mycoplasma_lipoprotein_cen_dom"/>
</dbReference>
<dbReference type="InterPro" id="IPR054825">
    <property type="entry name" value="P68-like"/>
</dbReference>
<dbReference type="NCBIfam" id="NF045826">
    <property type="entry name" value="lipo_P68"/>
    <property type="match status" value="1"/>
</dbReference>
<dbReference type="Pfam" id="PF03202">
    <property type="entry name" value="Lipoprotein_10"/>
    <property type="match status" value="1"/>
</dbReference>
<dbReference type="Pfam" id="PF03305">
    <property type="entry name" value="Lipoprotein_X"/>
    <property type="match status" value="1"/>
</dbReference>
<accession>P75139</accession>
<organism>
    <name type="scientific">Mycoplasma pneumoniae (strain ATCC 29342 / M129 / Subtype 1)</name>
    <name type="common">Mycoplasmoides pneumoniae</name>
    <dbReference type="NCBI Taxonomy" id="272634"/>
    <lineage>
        <taxon>Bacteria</taxon>
        <taxon>Bacillati</taxon>
        <taxon>Mycoplasmatota</taxon>
        <taxon>Mycoplasmoidales</taxon>
        <taxon>Mycoplasmoidaceae</taxon>
        <taxon>Mycoplasmoides</taxon>
    </lineage>
</organism>